<comment type="catalytic activity">
    <reaction evidence="1">
        <text>tRNA(Arg) + L-arginine + ATP = L-arginyl-tRNA(Arg) + AMP + diphosphate</text>
        <dbReference type="Rhea" id="RHEA:20301"/>
        <dbReference type="Rhea" id="RHEA-COMP:9658"/>
        <dbReference type="Rhea" id="RHEA-COMP:9673"/>
        <dbReference type="ChEBI" id="CHEBI:30616"/>
        <dbReference type="ChEBI" id="CHEBI:32682"/>
        <dbReference type="ChEBI" id="CHEBI:33019"/>
        <dbReference type="ChEBI" id="CHEBI:78442"/>
        <dbReference type="ChEBI" id="CHEBI:78513"/>
        <dbReference type="ChEBI" id="CHEBI:456215"/>
        <dbReference type="EC" id="6.1.1.19"/>
    </reaction>
</comment>
<comment type="subunit">
    <text evidence="1">Monomer.</text>
</comment>
<comment type="subcellular location">
    <subcellularLocation>
        <location evidence="1">Cytoplasm</location>
    </subcellularLocation>
</comment>
<comment type="similarity">
    <text evidence="1">Belongs to the class-I aminoacyl-tRNA synthetase family.</text>
</comment>
<accession>A5WAC2</accession>
<keyword id="KW-0030">Aminoacyl-tRNA synthetase</keyword>
<keyword id="KW-0067">ATP-binding</keyword>
<keyword id="KW-0963">Cytoplasm</keyword>
<keyword id="KW-0436">Ligase</keyword>
<keyword id="KW-0547">Nucleotide-binding</keyword>
<keyword id="KW-0648">Protein biosynthesis</keyword>
<protein>
    <recommendedName>
        <fullName evidence="1">Arginine--tRNA ligase</fullName>
        <ecNumber evidence="1">6.1.1.19</ecNumber>
    </recommendedName>
    <alternativeName>
        <fullName evidence="1">Arginyl-tRNA synthetase</fullName>
        <shortName evidence="1">ArgRS</shortName>
    </alternativeName>
</protein>
<name>SYR_PSEP1</name>
<proteinExistence type="inferred from homology"/>
<reference key="1">
    <citation type="submission" date="2007-05" db="EMBL/GenBank/DDBJ databases">
        <title>Complete sequence of Pseudomonas putida F1.</title>
        <authorList>
            <consortium name="US DOE Joint Genome Institute"/>
            <person name="Copeland A."/>
            <person name="Lucas S."/>
            <person name="Lapidus A."/>
            <person name="Barry K."/>
            <person name="Detter J.C."/>
            <person name="Glavina del Rio T."/>
            <person name="Hammon N."/>
            <person name="Israni S."/>
            <person name="Dalin E."/>
            <person name="Tice H."/>
            <person name="Pitluck S."/>
            <person name="Chain P."/>
            <person name="Malfatti S."/>
            <person name="Shin M."/>
            <person name="Vergez L."/>
            <person name="Schmutz J."/>
            <person name="Larimer F."/>
            <person name="Land M."/>
            <person name="Hauser L."/>
            <person name="Kyrpides N."/>
            <person name="Lykidis A."/>
            <person name="Parales R."/>
            <person name="Richardson P."/>
        </authorList>
    </citation>
    <scope>NUCLEOTIDE SEQUENCE [LARGE SCALE GENOMIC DNA]</scope>
    <source>
        <strain>ATCC 700007 / DSM 6899 / JCM 31910 / BCRC 17059 / LMG 24140 / F1</strain>
    </source>
</reference>
<feature type="chain" id="PRO_1000018094" description="Arginine--tRNA ligase">
    <location>
        <begin position="1"/>
        <end position="578"/>
    </location>
</feature>
<feature type="short sequence motif" description="'HIGH' region">
    <location>
        <begin position="127"/>
        <end position="137"/>
    </location>
</feature>
<organism>
    <name type="scientific">Pseudomonas putida (strain ATCC 700007 / DSM 6899 / JCM 31910 / BCRC 17059 / LMG 24140 / F1)</name>
    <dbReference type="NCBI Taxonomy" id="351746"/>
    <lineage>
        <taxon>Bacteria</taxon>
        <taxon>Pseudomonadati</taxon>
        <taxon>Pseudomonadota</taxon>
        <taxon>Gammaproteobacteria</taxon>
        <taxon>Pseudomonadales</taxon>
        <taxon>Pseudomonadaceae</taxon>
        <taxon>Pseudomonas</taxon>
    </lineage>
</organism>
<dbReference type="EC" id="6.1.1.19" evidence="1"/>
<dbReference type="EMBL" id="CP000712">
    <property type="protein sequence ID" value="ABQ81082.1"/>
    <property type="molecule type" value="Genomic_DNA"/>
</dbReference>
<dbReference type="SMR" id="A5WAC2"/>
<dbReference type="KEGG" id="ppf:Pput_4962"/>
<dbReference type="eggNOG" id="COG0018">
    <property type="taxonomic scope" value="Bacteria"/>
</dbReference>
<dbReference type="HOGENOM" id="CLU_006406_5_1_6"/>
<dbReference type="GO" id="GO:0005737">
    <property type="term" value="C:cytoplasm"/>
    <property type="evidence" value="ECO:0007669"/>
    <property type="project" value="UniProtKB-SubCell"/>
</dbReference>
<dbReference type="GO" id="GO:0004814">
    <property type="term" value="F:arginine-tRNA ligase activity"/>
    <property type="evidence" value="ECO:0007669"/>
    <property type="project" value="UniProtKB-UniRule"/>
</dbReference>
<dbReference type="GO" id="GO:0005524">
    <property type="term" value="F:ATP binding"/>
    <property type="evidence" value="ECO:0007669"/>
    <property type="project" value="UniProtKB-UniRule"/>
</dbReference>
<dbReference type="GO" id="GO:0006420">
    <property type="term" value="P:arginyl-tRNA aminoacylation"/>
    <property type="evidence" value="ECO:0007669"/>
    <property type="project" value="UniProtKB-UniRule"/>
</dbReference>
<dbReference type="CDD" id="cd00671">
    <property type="entry name" value="ArgRS_core"/>
    <property type="match status" value="1"/>
</dbReference>
<dbReference type="FunFam" id="3.30.1360.70:FF:000003">
    <property type="entry name" value="Arginine--tRNA ligase"/>
    <property type="match status" value="1"/>
</dbReference>
<dbReference type="FunFam" id="3.40.50.620:FF:000030">
    <property type="entry name" value="Arginine--tRNA ligase"/>
    <property type="match status" value="1"/>
</dbReference>
<dbReference type="FunFam" id="1.10.730.10:FF:000006">
    <property type="entry name" value="Arginyl-tRNA synthetase 2, mitochondrial"/>
    <property type="match status" value="1"/>
</dbReference>
<dbReference type="Gene3D" id="3.30.1360.70">
    <property type="entry name" value="Arginyl tRNA synthetase N-terminal domain"/>
    <property type="match status" value="1"/>
</dbReference>
<dbReference type="Gene3D" id="3.40.50.620">
    <property type="entry name" value="HUPs"/>
    <property type="match status" value="1"/>
</dbReference>
<dbReference type="Gene3D" id="1.10.730.10">
    <property type="entry name" value="Isoleucyl-tRNA Synthetase, Domain 1"/>
    <property type="match status" value="1"/>
</dbReference>
<dbReference type="HAMAP" id="MF_00123">
    <property type="entry name" value="Arg_tRNA_synth"/>
    <property type="match status" value="1"/>
</dbReference>
<dbReference type="InterPro" id="IPR001412">
    <property type="entry name" value="aa-tRNA-synth_I_CS"/>
</dbReference>
<dbReference type="InterPro" id="IPR001278">
    <property type="entry name" value="Arg-tRNA-ligase"/>
</dbReference>
<dbReference type="InterPro" id="IPR005148">
    <property type="entry name" value="Arg-tRNA-synth_N"/>
</dbReference>
<dbReference type="InterPro" id="IPR036695">
    <property type="entry name" value="Arg-tRNA-synth_N_sf"/>
</dbReference>
<dbReference type="InterPro" id="IPR035684">
    <property type="entry name" value="ArgRS_core"/>
</dbReference>
<dbReference type="InterPro" id="IPR008909">
    <property type="entry name" value="DALR_anticod-bd"/>
</dbReference>
<dbReference type="InterPro" id="IPR014729">
    <property type="entry name" value="Rossmann-like_a/b/a_fold"/>
</dbReference>
<dbReference type="InterPro" id="IPR009080">
    <property type="entry name" value="tRNAsynth_Ia_anticodon-bd"/>
</dbReference>
<dbReference type="NCBIfam" id="TIGR00456">
    <property type="entry name" value="argS"/>
    <property type="match status" value="1"/>
</dbReference>
<dbReference type="PANTHER" id="PTHR11956:SF5">
    <property type="entry name" value="ARGININE--TRNA LIGASE, CYTOPLASMIC"/>
    <property type="match status" value="1"/>
</dbReference>
<dbReference type="PANTHER" id="PTHR11956">
    <property type="entry name" value="ARGINYL-TRNA SYNTHETASE"/>
    <property type="match status" value="1"/>
</dbReference>
<dbReference type="Pfam" id="PF03485">
    <property type="entry name" value="Arg_tRNA_synt_N"/>
    <property type="match status" value="1"/>
</dbReference>
<dbReference type="Pfam" id="PF05746">
    <property type="entry name" value="DALR_1"/>
    <property type="match status" value="1"/>
</dbReference>
<dbReference type="Pfam" id="PF00750">
    <property type="entry name" value="tRNA-synt_1d"/>
    <property type="match status" value="1"/>
</dbReference>
<dbReference type="PRINTS" id="PR01038">
    <property type="entry name" value="TRNASYNTHARG"/>
</dbReference>
<dbReference type="SMART" id="SM01016">
    <property type="entry name" value="Arg_tRNA_synt_N"/>
    <property type="match status" value="1"/>
</dbReference>
<dbReference type="SMART" id="SM00836">
    <property type="entry name" value="DALR_1"/>
    <property type="match status" value="1"/>
</dbReference>
<dbReference type="SUPFAM" id="SSF47323">
    <property type="entry name" value="Anticodon-binding domain of a subclass of class I aminoacyl-tRNA synthetases"/>
    <property type="match status" value="1"/>
</dbReference>
<dbReference type="SUPFAM" id="SSF55190">
    <property type="entry name" value="Arginyl-tRNA synthetase (ArgRS), N-terminal 'additional' domain"/>
    <property type="match status" value="1"/>
</dbReference>
<dbReference type="SUPFAM" id="SSF52374">
    <property type="entry name" value="Nucleotidylyl transferase"/>
    <property type="match status" value="1"/>
</dbReference>
<dbReference type="PROSITE" id="PS00178">
    <property type="entry name" value="AA_TRNA_LIGASE_I"/>
    <property type="match status" value="1"/>
</dbReference>
<gene>
    <name evidence="1" type="primary">argS</name>
    <name type="ordered locus">Pput_4962</name>
</gene>
<evidence type="ECO:0000255" key="1">
    <source>
        <dbReference type="HAMAP-Rule" id="MF_00123"/>
    </source>
</evidence>
<sequence length="578" mass="63678">MKDTIRQLIQQALTQLVTDGVLPEGLSPAIQVENARDKTHGDFASNIAMMLAKPAGMKPRDLAEKLINALPASADISKVEIAGPGFLNFFQNTDALANRLDAALADAHLGARKAGPAQKVVIDMSAPNLAKEMHVGHLRSTIIGDSVARVLEFLGDNVIRQNHVGDWGTQFGMLMAYLQENPITSDELSDLENFYRAAKKRFDESEEFATRARGLVVKLQAGDPECLALWTRFKDISLSHCQKTYELLNVKLTMADVMGESAYNDDLANVVADLKAKGLLVEDQGAQCVFLDEFKNSEGDPLPVIVQKADGGYLYATTDLAAVRYRSNVLKADRALYFVDQRQALHFNQVFEVARRAGFVGHPMQMEHMGFGTMNGADGRPFKTRDGGTVKLIDLLTEAKERAYALVKEKNPSLADDELRHIGEVVGIGAVKYADLSKHRTSDYSFNFELMLNFEGNTAPYLLYAYTRVAGVFRKLGKGFDEVDGKIVLHAAHEQDLAARLAQFGEILNNVAEKGTPHVLCSYLYDLAGLFSSFYENCPILAAETPSQQQSRLRLAALTGRTLKQGLELLGLETLERM</sequence>